<keyword id="KW-0067">ATP-binding</keyword>
<keyword id="KW-0997">Cell inner membrane</keyword>
<keyword id="KW-1003">Cell membrane</keyword>
<keyword id="KW-0472">Membrane</keyword>
<keyword id="KW-0547">Nucleotide-binding</keyword>
<keyword id="KW-0918">Phosphonate transport</keyword>
<keyword id="KW-1278">Translocase</keyword>
<keyword id="KW-0813">Transport</keyword>
<accession>Q6RCE0</accession>
<gene>
    <name evidence="1" type="primary">phnC</name>
</gene>
<proteinExistence type="inferred from homology"/>
<comment type="function">
    <text evidence="2">Part of the ABC transporter complex PhnCDE involved in phosphonates import. Responsible for energy coupling to the transport system (Probable).</text>
</comment>
<comment type="catalytic activity">
    <reaction evidence="1">
        <text>phosphonate(out) + ATP + H2O = phosphonate(in) + ADP + phosphate + H(+)</text>
        <dbReference type="Rhea" id="RHEA:18065"/>
        <dbReference type="ChEBI" id="CHEBI:15377"/>
        <dbReference type="ChEBI" id="CHEBI:15378"/>
        <dbReference type="ChEBI" id="CHEBI:16215"/>
        <dbReference type="ChEBI" id="CHEBI:30616"/>
        <dbReference type="ChEBI" id="CHEBI:43474"/>
        <dbReference type="ChEBI" id="CHEBI:456216"/>
        <dbReference type="EC" id="7.3.2.2"/>
    </reaction>
</comment>
<comment type="subunit">
    <text evidence="1">The complex is composed of two ATP-binding proteins (PhnC), two transmembrane proteins (PhnE) and a solute-binding protein (PhnD).</text>
</comment>
<comment type="subcellular location">
    <subcellularLocation>
        <location evidence="1">Cell inner membrane</location>
        <topology evidence="1">Peripheral membrane protein</topology>
    </subcellularLocation>
</comment>
<comment type="similarity">
    <text evidence="1">Belongs to the ABC transporter superfamily. Phosphonates importer (TC 3.A.1.9.1) family.</text>
</comment>
<protein>
    <recommendedName>
        <fullName evidence="1">Phosphonates import ATP-binding protein PhnC</fullName>
        <ecNumber evidence="1">7.3.2.2</ecNumber>
    </recommendedName>
</protein>
<name>PHNC_STUST</name>
<organism>
    <name type="scientific">Stutzerimonas stutzeri</name>
    <name type="common">Pseudomonas stutzeri</name>
    <dbReference type="NCBI Taxonomy" id="316"/>
    <lineage>
        <taxon>Bacteria</taxon>
        <taxon>Pseudomonadati</taxon>
        <taxon>Pseudomonadota</taxon>
        <taxon>Gammaproteobacteria</taxon>
        <taxon>Pseudomonadales</taxon>
        <taxon>Pseudomonadaceae</taxon>
        <taxon>Stutzerimonas</taxon>
    </lineage>
</organism>
<feature type="chain" id="PRO_0000092723" description="Phosphonates import ATP-binding protein PhnC">
    <location>
        <begin position="1"/>
        <end position="276"/>
    </location>
</feature>
<feature type="domain" description="ABC transporter" evidence="1">
    <location>
        <begin position="5"/>
        <end position="253"/>
    </location>
</feature>
<feature type="binding site" evidence="1">
    <location>
        <begin position="37"/>
        <end position="44"/>
    </location>
    <ligand>
        <name>ATP</name>
        <dbReference type="ChEBI" id="CHEBI:30616"/>
    </ligand>
</feature>
<sequence length="276" mass="29961">MNAAIRVERLNKTFAGKQALFDLGLAIQPGEMVALIGASGSGKSTLLRHLAGLACCDRSAGGRIEVLGREVQATGRLHGEVRRLRADIGYIFQQFNLVTRLSVLDNVLLGFLGRMPRWRGSLGMFSDEQKRQAMAALERVGLAERAAQRASTLSGGQQQRVAIARALTQQAEVILADEPIASLDPESARKVMEILADINRQDGKTVVVTLHQVDYALRYCSRAVALKGGRIHYDGPSAALSDRLLNDLYGADLDASLLFSDRARNAEPRSLQLVNG</sequence>
<dbReference type="EC" id="7.3.2.2" evidence="1"/>
<dbReference type="EMBL" id="AY505177">
    <property type="protein sequence ID" value="AAR91731.1"/>
    <property type="molecule type" value="Genomic_DNA"/>
</dbReference>
<dbReference type="RefSeq" id="WP_014818580.1">
    <property type="nucleotide sequence ID" value="NZ_CP066045.1"/>
</dbReference>
<dbReference type="SMR" id="Q6RCE0"/>
<dbReference type="GO" id="GO:0005886">
    <property type="term" value="C:plasma membrane"/>
    <property type="evidence" value="ECO:0007669"/>
    <property type="project" value="UniProtKB-SubCell"/>
</dbReference>
<dbReference type="GO" id="GO:0015416">
    <property type="term" value="F:ABC-type phosphonate transporter activity"/>
    <property type="evidence" value="ECO:0007669"/>
    <property type="project" value="UniProtKB-EC"/>
</dbReference>
<dbReference type="GO" id="GO:0005524">
    <property type="term" value="F:ATP binding"/>
    <property type="evidence" value="ECO:0007669"/>
    <property type="project" value="UniProtKB-KW"/>
</dbReference>
<dbReference type="GO" id="GO:0016887">
    <property type="term" value="F:ATP hydrolysis activity"/>
    <property type="evidence" value="ECO:0007669"/>
    <property type="project" value="InterPro"/>
</dbReference>
<dbReference type="CDD" id="cd03256">
    <property type="entry name" value="ABC_PhnC_transporter"/>
    <property type="match status" value="1"/>
</dbReference>
<dbReference type="Gene3D" id="3.40.50.300">
    <property type="entry name" value="P-loop containing nucleotide triphosphate hydrolases"/>
    <property type="match status" value="1"/>
</dbReference>
<dbReference type="InterPro" id="IPR003593">
    <property type="entry name" value="AAA+_ATPase"/>
</dbReference>
<dbReference type="InterPro" id="IPR003439">
    <property type="entry name" value="ABC_transporter-like_ATP-bd"/>
</dbReference>
<dbReference type="InterPro" id="IPR017871">
    <property type="entry name" value="ABC_transporter-like_CS"/>
</dbReference>
<dbReference type="InterPro" id="IPR012693">
    <property type="entry name" value="ABC_transpr_PhnC"/>
</dbReference>
<dbReference type="InterPro" id="IPR050086">
    <property type="entry name" value="MetN_ABC_transporter-like"/>
</dbReference>
<dbReference type="InterPro" id="IPR027417">
    <property type="entry name" value="P-loop_NTPase"/>
</dbReference>
<dbReference type="NCBIfam" id="TIGR02315">
    <property type="entry name" value="ABC_phnC"/>
    <property type="match status" value="1"/>
</dbReference>
<dbReference type="PANTHER" id="PTHR43166">
    <property type="entry name" value="AMINO ACID IMPORT ATP-BINDING PROTEIN"/>
    <property type="match status" value="1"/>
</dbReference>
<dbReference type="PANTHER" id="PTHR43166:SF6">
    <property type="entry name" value="PHOSPHONATES IMPORT ATP-BINDING PROTEIN PHNC"/>
    <property type="match status" value="1"/>
</dbReference>
<dbReference type="Pfam" id="PF00005">
    <property type="entry name" value="ABC_tran"/>
    <property type="match status" value="1"/>
</dbReference>
<dbReference type="SMART" id="SM00382">
    <property type="entry name" value="AAA"/>
    <property type="match status" value="1"/>
</dbReference>
<dbReference type="SUPFAM" id="SSF52540">
    <property type="entry name" value="P-loop containing nucleoside triphosphate hydrolases"/>
    <property type="match status" value="1"/>
</dbReference>
<dbReference type="PROSITE" id="PS00211">
    <property type="entry name" value="ABC_TRANSPORTER_1"/>
    <property type="match status" value="1"/>
</dbReference>
<dbReference type="PROSITE" id="PS50893">
    <property type="entry name" value="ABC_TRANSPORTER_2"/>
    <property type="match status" value="1"/>
</dbReference>
<dbReference type="PROSITE" id="PS51249">
    <property type="entry name" value="PHNC"/>
    <property type="match status" value="1"/>
</dbReference>
<reference key="1">
    <citation type="journal article" date="2004" name="J. Bacteriol.">
        <title>Two C-P lyase operons in Pseudomonas stutzeri and their roles in the oxidation of phosphonates, phosphite, and hypophosphite.</title>
        <authorList>
            <person name="White A.K."/>
            <person name="Metcalf W.W."/>
        </authorList>
    </citation>
    <scope>NUCLEOTIDE SEQUENCE [GENOMIC DNA]</scope>
    <scope>FUNCTION</scope>
    <source>
        <strain>WM88</strain>
    </source>
</reference>
<evidence type="ECO:0000255" key="1">
    <source>
        <dbReference type="HAMAP-Rule" id="MF_01713"/>
    </source>
</evidence>
<evidence type="ECO:0000305" key="2">
    <source>
    </source>
</evidence>